<evidence type="ECO:0000250" key="1"/>
<evidence type="ECO:0000256" key="2">
    <source>
        <dbReference type="SAM" id="MobiDB-lite"/>
    </source>
</evidence>
<evidence type="ECO:0000305" key="3"/>
<evidence type="ECO:0007829" key="4">
    <source>
        <dbReference type="PDB" id="6TB5"/>
    </source>
</evidence>
<gene>
    <name type="primary">dps2</name>
    <name type="synonym">dps-2</name>
    <name type="ordered locus">DR_B0092</name>
</gene>
<keyword id="KW-0002">3D-structure</keyword>
<keyword id="KW-0963">Cytoplasm</keyword>
<keyword id="KW-0408">Iron</keyword>
<keyword id="KW-0409">Iron storage</keyword>
<keyword id="KW-0479">Metal-binding</keyword>
<keyword id="KW-0560">Oxidoreductase</keyword>
<keyword id="KW-0614">Plasmid</keyword>
<keyword id="KW-1185">Reference proteome</keyword>
<proteinExistence type="evidence at protein level"/>
<comment type="function">
    <text evidence="1">Protects DNA from oxidative damage by sequestering intracellular Fe(2+) ion and storing it in the form of Fe(3+) oxyhydroxide mineral. One hydrogen peroxide oxidizes two Fe(2+) ions, which prevents hydroxyl radical production by the Fenton reaction (By similarity).</text>
</comment>
<comment type="catalytic activity">
    <reaction>
        <text>2 Fe(2+) + H2O2 + 2 H(+) = 2 Fe(3+) + 2 H2O</text>
        <dbReference type="Rhea" id="RHEA:48712"/>
        <dbReference type="ChEBI" id="CHEBI:15377"/>
        <dbReference type="ChEBI" id="CHEBI:15378"/>
        <dbReference type="ChEBI" id="CHEBI:16240"/>
        <dbReference type="ChEBI" id="CHEBI:29033"/>
        <dbReference type="ChEBI" id="CHEBI:29034"/>
    </reaction>
</comment>
<comment type="subunit">
    <text evidence="1">Homododecamer. The 12 subunits form a hollow sphere into which the mineral iron core of up to 500 Fe(3+) can be deposited (By similarity).</text>
</comment>
<comment type="subcellular location">
    <subcellularLocation>
        <location evidence="1">Cytoplasm</location>
    </subcellularLocation>
</comment>
<comment type="similarity">
    <text evidence="3">Belongs to the Dps family.</text>
</comment>
<dbReference type="EC" id="1.16.-.-"/>
<dbReference type="EMBL" id="AE001826">
    <property type="protein sequence ID" value="AAF12541.1"/>
    <property type="molecule type" value="Genomic_DNA"/>
</dbReference>
<dbReference type="PIR" id="B75628">
    <property type="entry name" value="B75628"/>
</dbReference>
<dbReference type="RefSeq" id="NP_051625.1">
    <property type="nucleotide sequence ID" value="NC_000958.1"/>
</dbReference>
<dbReference type="RefSeq" id="WP_010883959.1">
    <property type="nucleotide sequence ID" value="NC_000958.1"/>
</dbReference>
<dbReference type="PDB" id="2C2J">
    <property type="method" value="X-ray"/>
    <property type="resolution" value="2.05 A"/>
    <property type="chains" value="A=31-241"/>
</dbReference>
<dbReference type="PDB" id="2C6R">
    <property type="method" value="X-ray"/>
    <property type="resolution" value="2.10 A"/>
    <property type="chains" value="A=31-241"/>
</dbReference>
<dbReference type="PDB" id="6TB5">
    <property type="method" value="X-ray"/>
    <property type="resolution" value="1.83 A"/>
    <property type="chains" value="A=31-241"/>
</dbReference>
<dbReference type="PDB" id="6TGT">
    <property type="method" value="X-ray"/>
    <property type="resolution" value="2.15 A"/>
    <property type="chains" value="A=31-239"/>
</dbReference>
<dbReference type="PDBsum" id="2C2J"/>
<dbReference type="PDBsum" id="2C6R"/>
<dbReference type="PDBsum" id="6TB5"/>
<dbReference type="PDBsum" id="6TGT"/>
<dbReference type="SASBDB" id="Q9RZN1"/>
<dbReference type="SMR" id="Q9RZN1"/>
<dbReference type="EnsemblBacteria" id="AAF12541">
    <property type="protein sequence ID" value="AAF12541"/>
    <property type="gene ID" value="DR_B0092"/>
</dbReference>
<dbReference type="GeneID" id="69519341"/>
<dbReference type="KEGG" id="dra:DR_B0092"/>
<dbReference type="PATRIC" id="fig|243230.17.peg.90"/>
<dbReference type="HOGENOM" id="CLU_090981_0_0_0"/>
<dbReference type="InParanoid" id="Q9RZN1"/>
<dbReference type="OrthoDB" id="9797023at2"/>
<dbReference type="EvolutionaryTrace" id="Q9RZN1"/>
<dbReference type="Proteomes" id="UP000002524">
    <property type="component" value="Plasmid MP1"/>
</dbReference>
<dbReference type="GO" id="GO:0005737">
    <property type="term" value="C:cytoplasm"/>
    <property type="evidence" value="ECO:0007669"/>
    <property type="project" value="UniProtKB-SubCell"/>
</dbReference>
<dbReference type="GO" id="GO:0008199">
    <property type="term" value="F:ferric iron binding"/>
    <property type="evidence" value="ECO:0007669"/>
    <property type="project" value="InterPro"/>
</dbReference>
<dbReference type="GO" id="GO:0016491">
    <property type="term" value="F:oxidoreductase activity"/>
    <property type="evidence" value="ECO:0007669"/>
    <property type="project" value="UniProtKB-KW"/>
</dbReference>
<dbReference type="GO" id="GO:0006879">
    <property type="term" value="P:intracellular iron ion homeostasis"/>
    <property type="evidence" value="ECO:0007669"/>
    <property type="project" value="UniProtKB-KW"/>
</dbReference>
<dbReference type="CDD" id="cd01043">
    <property type="entry name" value="DPS"/>
    <property type="match status" value="1"/>
</dbReference>
<dbReference type="Gene3D" id="1.20.1260.10">
    <property type="match status" value="1"/>
</dbReference>
<dbReference type="InterPro" id="IPR002177">
    <property type="entry name" value="DPS_DNA-bd"/>
</dbReference>
<dbReference type="InterPro" id="IPR012347">
    <property type="entry name" value="Ferritin-like"/>
</dbReference>
<dbReference type="InterPro" id="IPR009078">
    <property type="entry name" value="Ferritin-like_SF"/>
</dbReference>
<dbReference type="InterPro" id="IPR008331">
    <property type="entry name" value="Ferritin_DPS_dom"/>
</dbReference>
<dbReference type="PANTHER" id="PTHR42932:SF3">
    <property type="entry name" value="DNA PROTECTION DURING STARVATION PROTEIN"/>
    <property type="match status" value="1"/>
</dbReference>
<dbReference type="PANTHER" id="PTHR42932">
    <property type="entry name" value="GENERAL STRESS PROTEIN 20U"/>
    <property type="match status" value="1"/>
</dbReference>
<dbReference type="Pfam" id="PF00210">
    <property type="entry name" value="Ferritin"/>
    <property type="match status" value="1"/>
</dbReference>
<dbReference type="PRINTS" id="PR01346">
    <property type="entry name" value="HELNAPAPROT"/>
</dbReference>
<dbReference type="SUPFAM" id="SSF47240">
    <property type="entry name" value="Ferritin-like"/>
    <property type="match status" value="1"/>
</dbReference>
<sequence>MRHSVKTVVVVSSLLLGTALAGGAGAQSAGNGVPSTNVNTPAPNTGQSTAQNTNTASPLPYNRATTLPAAGTEDLKKSVQALQNTLTELQALQLQTKQAHWNVSGTLWYTLHELLQDHYEGISKFADDVAERQLSVGASSDGRAITIVAASRLPEIPGGFLDDAQVIQFFTYQYETVGQRIHQRVGDVEKVDPTTANLLQEVEHIIEKYQWQMRAFLQNTPTDPNTGFDINNGKPVPLRGR</sequence>
<reference key="1">
    <citation type="journal article" date="1999" name="Science">
        <title>Genome sequence of the radioresistant bacterium Deinococcus radiodurans R1.</title>
        <authorList>
            <person name="White O."/>
            <person name="Eisen J.A."/>
            <person name="Heidelberg J.F."/>
            <person name="Hickey E.K."/>
            <person name="Peterson J.D."/>
            <person name="Dodson R.J."/>
            <person name="Haft D.H."/>
            <person name="Gwinn M.L."/>
            <person name="Nelson W.C."/>
            <person name="Richardson D.L."/>
            <person name="Moffat K.S."/>
            <person name="Qin H."/>
            <person name="Jiang L."/>
            <person name="Pamphile W."/>
            <person name="Crosby M."/>
            <person name="Shen M."/>
            <person name="Vamathevan J.J."/>
            <person name="Lam P."/>
            <person name="McDonald L.A."/>
            <person name="Utterback T.R."/>
            <person name="Zalewski C."/>
            <person name="Makarova K.S."/>
            <person name="Aravind L."/>
            <person name="Daly M.J."/>
            <person name="Minton K.W."/>
            <person name="Fleischmann R.D."/>
            <person name="Ketchum K.A."/>
            <person name="Nelson K.E."/>
            <person name="Salzberg S.L."/>
            <person name="Smith H.O."/>
            <person name="Venter J.C."/>
            <person name="Fraser C.M."/>
        </authorList>
    </citation>
    <scope>NUCLEOTIDE SEQUENCE [LARGE SCALE GENOMIC DNA]</scope>
    <source>
        <strain>ATCC 13939 / DSM 20539 / JCM 16871 / CCUG 27074 / LMG 4051 / NBRC 15346 / NCIMB 9279 / VKM B-1422 / R1</strain>
    </source>
</reference>
<geneLocation type="plasmid">
    <name>megaplasmid MP1</name>
</geneLocation>
<feature type="chain" id="PRO_0000253328" description="DNA protection during starvation protein 2">
    <location>
        <begin position="1"/>
        <end position="241"/>
    </location>
</feature>
<feature type="region of interest" description="Disordered" evidence="2">
    <location>
        <begin position="25"/>
        <end position="65"/>
    </location>
</feature>
<feature type="region of interest" description="Disordered" evidence="2">
    <location>
        <begin position="220"/>
        <end position="241"/>
    </location>
</feature>
<feature type="compositionally biased region" description="Polar residues" evidence="2">
    <location>
        <begin position="33"/>
        <end position="57"/>
    </location>
</feature>
<feature type="compositionally biased region" description="Polar residues" evidence="2">
    <location>
        <begin position="220"/>
        <end position="229"/>
    </location>
</feature>
<feature type="binding site" evidence="1">
    <location>
        <position position="100"/>
    </location>
    <ligand>
        <name>Fe cation</name>
        <dbReference type="ChEBI" id="CHEBI:24875"/>
        <label>1</label>
        <note>ligand shared between two dodecameric partners</note>
    </ligand>
</feature>
<feature type="binding site" description="in other chain" evidence="1">
    <location>
        <position position="127"/>
    </location>
    <ligand>
        <name>Fe cation</name>
        <dbReference type="ChEBI" id="CHEBI:24875"/>
        <label>1</label>
        <note>ligand shared between two dodecameric partners</note>
    </ligand>
</feature>
<feature type="binding site" description="in other chain" evidence="1">
    <location>
        <position position="131"/>
    </location>
    <ligand>
        <name>Fe cation</name>
        <dbReference type="ChEBI" id="CHEBI:24875"/>
        <label>1</label>
        <note>ligand shared between two dodecameric partners</note>
    </ligand>
</feature>
<feature type="binding site" evidence="1">
    <location>
        <position position="131"/>
    </location>
    <ligand>
        <name>Fe cation</name>
        <dbReference type="ChEBI" id="CHEBI:24875"/>
        <label>2</label>
    </ligand>
</feature>
<feature type="helix" evidence="4">
    <location>
        <begin position="73"/>
        <end position="102"/>
    </location>
</feature>
<feature type="strand" evidence="4">
    <location>
        <begin position="103"/>
        <end position="105"/>
    </location>
</feature>
<feature type="helix" evidence="4">
    <location>
        <begin position="108"/>
        <end position="135"/>
    </location>
</feature>
<feature type="helix" evidence="4">
    <location>
        <begin position="144"/>
        <end position="149"/>
    </location>
</feature>
<feature type="strand" evidence="4">
    <location>
        <begin position="159"/>
        <end position="162"/>
    </location>
</feature>
<feature type="helix" evidence="4">
    <location>
        <begin position="163"/>
        <end position="188"/>
    </location>
</feature>
<feature type="turn" evidence="4">
    <location>
        <begin position="189"/>
        <end position="191"/>
    </location>
</feature>
<feature type="helix" evidence="4">
    <location>
        <begin position="193"/>
        <end position="214"/>
    </location>
</feature>
<feature type="helix" evidence="4">
    <location>
        <begin position="215"/>
        <end position="217"/>
    </location>
</feature>
<feature type="helix" evidence="4">
    <location>
        <begin position="228"/>
        <end position="230"/>
    </location>
</feature>
<feature type="turn" evidence="4">
    <location>
        <begin position="231"/>
        <end position="233"/>
    </location>
</feature>
<name>DPS2_DEIRA</name>
<protein>
    <recommendedName>
        <fullName>DNA protection during starvation protein 2</fullName>
        <ecNumber>1.16.-.-</ecNumber>
    </recommendedName>
</protein>
<accession>Q9RZN1</accession>
<organism>
    <name type="scientific">Deinococcus radiodurans (strain ATCC 13939 / DSM 20539 / JCM 16871 / CCUG 27074 / LMG 4051 / NBRC 15346 / NCIMB 9279 / VKM B-1422 / R1)</name>
    <dbReference type="NCBI Taxonomy" id="243230"/>
    <lineage>
        <taxon>Bacteria</taxon>
        <taxon>Thermotogati</taxon>
        <taxon>Deinococcota</taxon>
        <taxon>Deinococci</taxon>
        <taxon>Deinococcales</taxon>
        <taxon>Deinococcaceae</taxon>
        <taxon>Deinococcus</taxon>
    </lineage>
</organism>